<reference evidence="11" key="1">
    <citation type="journal article" date="2000" name="Science">
        <title>The genome sequence of Drosophila melanogaster.</title>
        <authorList>
            <person name="Adams M.D."/>
            <person name="Celniker S.E."/>
            <person name="Holt R.A."/>
            <person name="Evans C.A."/>
            <person name="Gocayne J.D."/>
            <person name="Amanatides P.G."/>
            <person name="Scherer S.E."/>
            <person name="Li P.W."/>
            <person name="Hoskins R.A."/>
            <person name="Galle R.F."/>
            <person name="George R.A."/>
            <person name="Lewis S.E."/>
            <person name="Richards S."/>
            <person name="Ashburner M."/>
            <person name="Henderson S.N."/>
            <person name="Sutton G.G."/>
            <person name="Wortman J.R."/>
            <person name="Yandell M.D."/>
            <person name="Zhang Q."/>
            <person name="Chen L.X."/>
            <person name="Brandon R.C."/>
            <person name="Rogers Y.-H.C."/>
            <person name="Blazej R.G."/>
            <person name="Champe M."/>
            <person name="Pfeiffer B.D."/>
            <person name="Wan K.H."/>
            <person name="Doyle C."/>
            <person name="Baxter E.G."/>
            <person name="Helt G."/>
            <person name="Nelson C.R."/>
            <person name="Miklos G.L.G."/>
            <person name="Abril J.F."/>
            <person name="Agbayani A."/>
            <person name="An H.-J."/>
            <person name="Andrews-Pfannkoch C."/>
            <person name="Baldwin D."/>
            <person name="Ballew R.M."/>
            <person name="Basu A."/>
            <person name="Baxendale J."/>
            <person name="Bayraktaroglu L."/>
            <person name="Beasley E.M."/>
            <person name="Beeson K.Y."/>
            <person name="Benos P.V."/>
            <person name="Berman B.P."/>
            <person name="Bhandari D."/>
            <person name="Bolshakov S."/>
            <person name="Borkova D."/>
            <person name="Botchan M.R."/>
            <person name="Bouck J."/>
            <person name="Brokstein P."/>
            <person name="Brottier P."/>
            <person name="Burtis K.C."/>
            <person name="Busam D.A."/>
            <person name="Butler H."/>
            <person name="Cadieu E."/>
            <person name="Center A."/>
            <person name="Chandra I."/>
            <person name="Cherry J.M."/>
            <person name="Cawley S."/>
            <person name="Dahlke C."/>
            <person name="Davenport L.B."/>
            <person name="Davies P."/>
            <person name="de Pablos B."/>
            <person name="Delcher A."/>
            <person name="Deng Z."/>
            <person name="Mays A.D."/>
            <person name="Dew I."/>
            <person name="Dietz S.M."/>
            <person name="Dodson K."/>
            <person name="Doup L.E."/>
            <person name="Downes M."/>
            <person name="Dugan-Rocha S."/>
            <person name="Dunkov B.C."/>
            <person name="Dunn P."/>
            <person name="Durbin K.J."/>
            <person name="Evangelista C.C."/>
            <person name="Ferraz C."/>
            <person name="Ferriera S."/>
            <person name="Fleischmann W."/>
            <person name="Fosler C."/>
            <person name="Gabrielian A.E."/>
            <person name="Garg N.S."/>
            <person name="Gelbart W.M."/>
            <person name="Glasser K."/>
            <person name="Glodek A."/>
            <person name="Gong F."/>
            <person name="Gorrell J.H."/>
            <person name="Gu Z."/>
            <person name="Guan P."/>
            <person name="Harris M."/>
            <person name="Harris N.L."/>
            <person name="Harvey D.A."/>
            <person name="Heiman T.J."/>
            <person name="Hernandez J.R."/>
            <person name="Houck J."/>
            <person name="Hostin D."/>
            <person name="Houston K.A."/>
            <person name="Howland T.J."/>
            <person name="Wei M.-H."/>
            <person name="Ibegwam C."/>
            <person name="Jalali M."/>
            <person name="Kalush F."/>
            <person name="Karpen G.H."/>
            <person name="Ke Z."/>
            <person name="Kennison J.A."/>
            <person name="Ketchum K.A."/>
            <person name="Kimmel B.E."/>
            <person name="Kodira C.D."/>
            <person name="Kraft C.L."/>
            <person name="Kravitz S."/>
            <person name="Kulp D."/>
            <person name="Lai Z."/>
            <person name="Lasko P."/>
            <person name="Lei Y."/>
            <person name="Levitsky A.A."/>
            <person name="Li J.H."/>
            <person name="Li Z."/>
            <person name="Liang Y."/>
            <person name="Lin X."/>
            <person name="Liu X."/>
            <person name="Mattei B."/>
            <person name="McIntosh T.C."/>
            <person name="McLeod M.P."/>
            <person name="McPherson D."/>
            <person name="Merkulov G."/>
            <person name="Milshina N.V."/>
            <person name="Mobarry C."/>
            <person name="Morris J."/>
            <person name="Moshrefi A."/>
            <person name="Mount S.M."/>
            <person name="Moy M."/>
            <person name="Murphy B."/>
            <person name="Murphy L."/>
            <person name="Muzny D.M."/>
            <person name="Nelson D.L."/>
            <person name="Nelson D.R."/>
            <person name="Nelson K.A."/>
            <person name="Nixon K."/>
            <person name="Nusskern D.R."/>
            <person name="Pacleb J.M."/>
            <person name="Palazzolo M."/>
            <person name="Pittman G.S."/>
            <person name="Pan S."/>
            <person name="Pollard J."/>
            <person name="Puri V."/>
            <person name="Reese M.G."/>
            <person name="Reinert K."/>
            <person name="Remington K."/>
            <person name="Saunders R.D.C."/>
            <person name="Scheeler F."/>
            <person name="Shen H."/>
            <person name="Shue B.C."/>
            <person name="Siden-Kiamos I."/>
            <person name="Simpson M."/>
            <person name="Skupski M.P."/>
            <person name="Smith T.J."/>
            <person name="Spier E."/>
            <person name="Spradling A.C."/>
            <person name="Stapleton M."/>
            <person name="Strong R."/>
            <person name="Sun E."/>
            <person name="Svirskas R."/>
            <person name="Tector C."/>
            <person name="Turner R."/>
            <person name="Venter E."/>
            <person name="Wang A.H."/>
            <person name="Wang X."/>
            <person name="Wang Z.-Y."/>
            <person name="Wassarman D.A."/>
            <person name="Weinstock G.M."/>
            <person name="Weissenbach J."/>
            <person name="Williams S.M."/>
            <person name="Woodage T."/>
            <person name="Worley K.C."/>
            <person name="Wu D."/>
            <person name="Yang S."/>
            <person name="Yao Q.A."/>
            <person name="Ye J."/>
            <person name="Yeh R.-F."/>
            <person name="Zaveri J.S."/>
            <person name="Zhan M."/>
            <person name="Zhang G."/>
            <person name="Zhao Q."/>
            <person name="Zheng L."/>
            <person name="Zheng X.H."/>
            <person name="Zhong F.N."/>
            <person name="Zhong W."/>
            <person name="Zhou X."/>
            <person name="Zhu S.C."/>
            <person name="Zhu X."/>
            <person name="Smith H.O."/>
            <person name="Gibbs R.A."/>
            <person name="Myers E.W."/>
            <person name="Rubin G.M."/>
            <person name="Venter J.C."/>
        </authorList>
    </citation>
    <scope>NUCLEOTIDE SEQUENCE [LARGE SCALE GENOMIC DNA]</scope>
    <source>
        <strain evidence="11">Berkeley</strain>
    </source>
</reference>
<reference evidence="11" key="2">
    <citation type="journal article" date="2002" name="Genome Biol.">
        <title>Annotation of the Drosophila melanogaster euchromatic genome: a systematic review.</title>
        <authorList>
            <person name="Misra S."/>
            <person name="Crosby M.A."/>
            <person name="Mungall C.J."/>
            <person name="Matthews B.B."/>
            <person name="Campbell K.S."/>
            <person name="Hradecky P."/>
            <person name="Huang Y."/>
            <person name="Kaminker J.S."/>
            <person name="Millburn G.H."/>
            <person name="Prochnik S.E."/>
            <person name="Smith C.D."/>
            <person name="Tupy J.L."/>
            <person name="Whitfield E.J."/>
            <person name="Bayraktaroglu L."/>
            <person name="Berman B.P."/>
            <person name="Bettencourt B.R."/>
            <person name="Celniker S.E."/>
            <person name="de Grey A.D.N.J."/>
            <person name="Drysdale R.A."/>
            <person name="Harris N.L."/>
            <person name="Richter J."/>
            <person name="Russo S."/>
            <person name="Schroeder A.J."/>
            <person name="Shu S.Q."/>
            <person name="Stapleton M."/>
            <person name="Yamada C."/>
            <person name="Ashburner M."/>
            <person name="Gelbart W.M."/>
            <person name="Rubin G.M."/>
            <person name="Lewis S.E."/>
        </authorList>
    </citation>
    <scope>GENOME REANNOTATION</scope>
    <source>
        <strain evidence="11">Berkeley</strain>
    </source>
</reference>
<reference evidence="9" key="3">
    <citation type="journal article" date="2000" name="Science">
        <title>A Drosophila complementary DNA resource.</title>
        <authorList>
            <person name="Rubin G.M."/>
            <person name="Hong L."/>
            <person name="Brokstein P."/>
            <person name="Evans-Holm M."/>
            <person name="Frise E."/>
            <person name="Stapleton M."/>
            <person name="Harvey D.A."/>
        </authorList>
    </citation>
    <scope>NUCLEOTIDE SEQUENCE [LARGE SCALE MRNA]</scope>
    <source>
        <tissue evidence="9">Embryo</tissue>
    </source>
</reference>
<reference key="4">
    <citation type="journal article" date="2013" name="Science">
        <title>A Tumor suppressor complex with GAP activity for the Rag GTPases that signal amino acid sufficiency to mTORC1.</title>
        <authorList>
            <person name="Bar-Peled L."/>
            <person name="Chantranupong L."/>
            <person name="Cherniack A.D."/>
            <person name="Chen W.W."/>
            <person name="Ottina K.A."/>
            <person name="Grabiner B.C."/>
            <person name="Spear E.D."/>
            <person name="Carter S.L."/>
            <person name="Meyerson M."/>
            <person name="Sabatini D.M."/>
        </authorList>
    </citation>
    <scope>FUNCTION</scope>
</reference>
<reference evidence="8" key="5">
    <citation type="journal article" date="2016" name="PLoS Genet.">
        <title>The GATOR2 component Wdr24 regulates TORC1 activity and lysosome function.</title>
        <authorList>
            <person name="Cai W."/>
            <person name="Wei Y."/>
            <person name="Jarnik M."/>
            <person name="Reich J."/>
            <person name="Lilly M.A."/>
        </authorList>
    </citation>
    <scope>FUNCTION</scope>
    <scope>IDENTIFICATION IN THE GATOR COMPLEX</scope>
    <scope>INTERACTION WITH MIO; NPRL3 AND NUP44A</scope>
    <scope>SUBCELLULAR LOCATION</scope>
    <scope>DISRUPTION PHENOTYPE</scope>
</reference>
<reference key="6">
    <citation type="journal article" date="2024" name="Nat. Commun.">
        <title>An evolutionary mechanism to assimilate new nutrient sensors into the mTORC1 pathway.</title>
        <authorList>
            <person name="Liu G.Y."/>
            <person name="Jouandin P."/>
            <person name="Bahng R.E."/>
            <person name="Perrimon N."/>
            <person name="Sabatini D.M."/>
        </authorList>
    </citation>
    <scope>INTERACTION WITH UNMET</scope>
</reference>
<comment type="function">
    <text evidence="1 4 5">An essential component of the GATOR subcomplex GATOR2 which functions as an activator of the amino acid-sensing branch of the mTORC1 signaling pathway (PubMed:23723238, PubMed:27166823). The two GATOR subcomplexes, GATOR1 and GATOR2, regulate the mTORC1 pathway in order to mediate metabolic homeostasis, female gametogenesis and the response to amino acid limitation and complete starvation (PubMed:23723238, PubMed:27166823). GATOR2 activates the mTORC1 signaling pathway through the inhibition of the GATOR1 subcomplex, controlling the switch to cell proliferation and growth under nutrient replete conditions and during female oocyte development (PubMed:23723238, PubMed:27166823). GATOR2 probably acts as an E3 ubiquitin-protein ligase toward GATOR1 (By similarity). In the presence of abundant amino acids, the GATOR2 complex mediates ubiquitination of components of the GATOR1 complex, leading to GATOR1 inactivation (By similarity). This GATOR2 component is required for activating mTORC1 and promoting cell growth in both germline and somatic cells (PubMed:23723238, PubMed:27166823). In addition to its role in regulation of the mTORC1 complex, functions independently of mTORC1 to promote the acidification of lysosomes and facilitates autophagic flux (PubMed:27166823).</text>
</comment>
<comment type="catalytic activity">
    <reaction evidence="1">
        <text>S-ubiquitinyl-[E2 ubiquitin-conjugating enzyme]-L-cysteine + [acceptor protein]-L-lysine = [E2 ubiquitin-conjugating enzyme]-L-cysteine + N(6)-ubiquitinyl-[acceptor protein]-L-lysine.</text>
        <dbReference type="EC" id="2.3.2.27"/>
    </reaction>
</comment>
<comment type="pathway">
    <text evidence="1">Protein modification; protein ubiquitination.</text>
</comment>
<comment type="subunit">
    <text evidence="5 6">Component of the GATOR complex consisting of mio, Nup44A/Seh1, Im11, Nplr3, Nplr2, Wdr24, Wdr59 and Sec13. Within the GATOR complex, probable component of the GATOR2 subcomplex which is likely composed of mio, Nup44A/Seh1, Wdr24, Wdr59 and Sec13 (PubMed:27166823). Interacts with Nup44A/Seh1 (PubMed:27166823). Interacts with mio (PubMed:27166823). Interacts with Nplr3 (PubMed:27166823). The GATOR2 complex associates with unmet in the absence of S-adenosyl-L-methionine; the mio-Wdr24-Nup44A subcomplex is essential and sufficient for this interaction while Wdr59 and Sec13 are dispensable (PubMed:38514639). This association acts as a nutrient sensor to inhibit mTORC1 signaling in the absence of methionine (PubMed:38514639).</text>
</comment>
<comment type="interaction">
    <interactant intactId="EBI-3407214">
        <id>Q9XZ25</id>
    </interactant>
    <interactant intactId="EBI-3418826">
        <id>Q9VQ89</id>
        <label>mio</label>
    </interactant>
    <organismsDiffer>false</organismsDiffer>
    <experiments>2</experiments>
</comment>
<comment type="interaction">
    <interactant intactId="EBI-3407214">
        <id>Q9XZ25</id>
    </interactant>
    <interactant intactId="EBI-113252">
        <id>Q9VUB4</id>
        <label>Nprl3</label>
    </interactant>
    <organismsDiffer>false</organismsDiffer>
    <experiments>2</experiments>
</comment>
<comment type="interaction">
    <interactant intactId="EBI-3407214">
        <id>Q9XZ25</id>
    </interactant>
    <interactant intactId="EBI-118041">
        <id>Q7K2X8</id>
        <label>Nup44A</label>
    </interactant>
    <organismsDiffer>false</organismsDiffer>
    <experiments>2</experiments>
</comment>
<comment type="subcellular location">
    <subcellularLocation>
        <location evidence="5">Lysosome</location>
    </subcellularLocation>
    <subcellularLocation>
        <location evidence="5">Cytoplasmic vesicle</location>
        <location evidence="5">Autophagosome</location>
    </subcellularLocation>
    <text evidence="5">Localizes to lysosomes and autolysosomes under fed and starved conditions (PubMed:27166823). In female egg chambers, localizes primarily to autophagosomes and autolysosomes during amino-acid starvation (PubMed:27166823).</text>
</comment>
<comment type="disruption phenotype">
    <text evidence="5">No effect on viability. Decreased mTORC1 complex activity. Decreased body size and weight. Mutant females have small ovaries, reduced egg chamber growth and exhibit a 90% reduction in eggs laid per day. Activation of autophagy and accumulation of autolysosomes independent of nutritional status.</text>
</comment>
<comment type="similarity">
    <text evidence="8">Belongs to the WD repeat WDR24 family.</text>
</comment>
<protein>
    <recommendedName>
        <fullName evidence="8">GATOR2 complex protein Wdr24</fullName>
        <ecNumber evidence="1">2.3.2.27</ecNumber>
    </recommendedName>
    <alternativeName>
        <fullName evidence="7">WD repeat-containing protein 24</fullName>
    </alternativeName>
</protein>
<organism evidence="11">
    <name type="scientific">Drosophila melanogaster</name>
    <name type="common">Fruit fly</name>
    <dbReference type="NCBI Taxonomy" id="7227"/>
    <lineage>
        <taxon>Eukaryota</taxon>
        <taxon>Metazoa</taxon>
        <taxon>Ecdysozoa</taxon>
        <taxon>Arthropoda</taxon>
        <taxon>Hexapoda</taxon>
        <taxon>Insecta</taxon>
        <taxon>Pterygota</taxon>
        <taxon>Neoptera</taxon>
        <taxon>Endopterygota</taxon>
        <taxon>Diptera</taxon>
        <taxon>Brachycera</taxon>
        <taxon>Muscomorpha</taxon>
        <taxon>Ephydroidea</taxon>
        <taxon>Drosophilidae</taxon>
        <taxon>Drosophila</taxon>
        <taxon>Sophophora</taxon>
    </lineage>
</organism>
<accession>Q9XZ25</accession>
<name>WDR24_DROME</name>
<gene>
    <name evidence="7 10" type="primary">Wdr24</name>
    <name evidence="10" type="ORF">CG7609</name>
</gene>
<proteinExistence type="evidence at protein level"/>
<evidence type="ECO:0000250" key="1">
    <source>
        <dbReference type="UniProtKB" id="Q96S15"/>
    </source>
</evidence>
<evidence type="ECO:0000255" key="2"/>
<evidence type="ECO:0000256" key="3">
    <source>
        <dbReference type="SAM" id="MobiDB-lite"/>
    </source>
</evidence>
<evidence type="ECO:0000269" key="4">
    <source>
    </source>
</evidence>
<evidence type="ECO:0000269" key="5">
    <source>
    </source>
</evidence>
<evidence type="ECO:0000269" key="6">
    <source>
    </source>
</evidence>
<evidence type="ECO:0000303" key="7">
    <source>
    </source>
</evidence>
<evidence type="ECO:0000305" key="8"/>
<evidence type="ECO:0000312" key="9">
    <source>
        <dbReference type="EMBL" id="AAD34769.1"/>
    </source>
</evidence>
<evidence type="ECO:0000312" key="10">
    <source>
        <dbReference type="FlyBase" id="FBgn0027518"/>
    </source>
</evidence>
<evidence type="ECO:0000312" key="11">
    <source>
        <dbReference type="Proteomes" id="UP000000803"/>
    </source>
</evidence>
<keyword id="KW-0072">Autophagy</keyword>
<keyword id="KW-0131">Cell cycle</keyword>
<keyword id="KW-0132">Cell division</keyword>
<keyword id="KW-0968">Cytoplasmic vesicle</keyword>
<keyword id="KW-0458">Lysosome</keyword>
<keyword id="KW-0479">Metal-binding</keyword>
<keyword id="KW-0498">Mitosis</keyword>
<keyword id="KW-1185">Reference proteome</keyword>
<keyword id="KW-0677">Repeat</keyword>
<keyword id="KW-0808">Transferase</keyword>
<keyword id="KW-0833">Ubl conjugation pathway</keyword>
<keyword id="KW-0853">WD repeat</keyword>
<keyword id="KW-0862">Zinc</keyword>
<keyword id="KW-0863">Zinc-finger</keyword>
<dbReference type="EC" id="2.3.2.27" evidence="1"/>
<dbReference type="EMBL" id="AE014297">
    <property type="protein sequence ID" value="AAN14184.1"/>
    <property type="molecule type" value="Genomic_DNA"/>
</dbReference>
<dbReference type="EMBL" id="AF132181">
    <property type="protein sequence ID" value="AAD34769.1"/>
    <property type="molecule type" value="mRNA"/>
</dbReference>
<dbReference type="RefSeq" id="NP_651720.3">
    <property type="nucleotide sequence ID" value="NM_143463.5"/>
</dbReference>
<dbReference type="SMR" id="Q9XZ25"/>
<dbReference type="ComplexPortal" id="CPX-2664">
    <property type="entry name" value="GATOR2 complex"/>
</dbReference>
<dbReference type="FunCoup" id="Q9XZ25">
    <property type="interactions" value="1476"/>
</dbReference>
<dbReference type="IntAct" id="Q9XZ25">
    <property type="interactions" value="8"/>
</dbReference>
<dbReference type="STRING" id="7227.FBpp0303329"/>
<dbReference type="GlyGen" id="Q9XZ25">
    <property type="glycosylation" value="1 site"/>
</dbReference>
<dbReference type="PaxDb" id="7227-FBpp0303329"/>
<dbReference type="DNASU" id="43505"/>
<dbReference type="EnsemblMetazoa" id="FBtr0085543">
    <property type="protein sequence ID" value="FBpp0084909"/>
    <property type="gene ID" value="FBgn0027518"/>
</dbReference>
<dbReference type="GeneID" id="43505"/>
<dbReference type="KEGG" id="dme:Dmel_CG7609"/>
<dbReference type="UCSC" id="CG7609-RB">
    <property type="organism name" value="d. melanogaster"/>
</dbReference>
<dbReference type="AGR" id="FB:FBgn0027518"/>
<dbReference type="CTD" id="84219"/>
<dbReference type="FlyBase" id="FBgn0027518">
    <property type="gene designation" value="Wdr24"/>
</dbReference>
<dbReference type="VEuPathDB" id="VectorBase:FBgn0027518"/>
<dbReference type="eggNOG" id="KOG0269">
    <property type="taxonomic scope" value="Eukaryota"/>
</dbReference>
<dbReference type="GeneTree" id="ENSGT00940000159396"/>
<dbReference type="HOGENOM" id="CLU_010233_0_0_1"/>
<dbReference type="InParanoid" id="Q9XZ25"/>
<dbReference type="OrthoDB" id="60955at2759"/>
<dbReference type="PhylomeDB" id="Q9XZ25"/>
<dbReference type="UniPathway" id="UPA00143"/>
<dbReference type="BioGRID-ORCS" id="43505">
    <property type="hits" value="0 hits in 1 CRISPR screen"/>
</dbReference>
<dbReference type="GenomeRNAi" id="43505"/>
<dbReference type="PRO" id="PR:Q9XZ25"/>
<dbReference type="Proteomes" id="UP000000803">
    <property type="component" value="Chromosome 3R"/>
</dbReference>
<dbReference type="Bgee" id="FBgn0027518">
    <property type="expression patterns" value="Expressed in egg chamber and 32 other cell types or tissues"/>
</dbReference>
<dbReference type="ExpressionAtlas" id="Q9XZ25">
    <property type="expression patterns" value="baseline and differential"/>
</dbReference>
<dbReference type="GO" id="GO:0044754">
    <property type="term" value="C:autolysosome"/>
    <property type="evidence" value="ECO:0000314"/>
    <property type="project" value="UniProtKB"/>
</dbReference>
<dbReference type="GO" id="GO:0005776">
    <property type="term" value="C:autophagosome"/>
    <property type="evidence" value="ECO:0007669"/>
    <property type="project" value="UniProtKB-SubCell"/>
</dbReference>
<dbReference type="GO" id="GO:0031410">
    <property type="term" value="C:cytoplasmic vesicle"/>
    <property type="evidence" value="ECO:0007669"/>
    <property type="project" value="UniProtKB-KW"/>
</dbReference>
<dbReference type="GO" id="GO:0005829">
    <property type="term" value="C:cytosol"/>
    <property type="evidence" value="ECO:0000318"/>
    <property type="project" value="GO_Central"/>
</dbReference>
<dbReference type="GO" id="GO:0061700">
    <property type="term" value="C:GATOR2 complex"/>
    <property type="evidence" value="ECO:0000314"/>
    <property type="project" value="UniProtKB"/>
</dbReference>
<dbReference type="GO" id="GO:0005764">
    <property type="term" value="C:lysosome"/>
    <property type="evidence" value="ECO:0000314"/>
    <property type="project" value="UniProtKB"/>
</dbReference>
<dbReference type="GO" id="GO:0035859">
    <property type="term" value="C:Seh1-associated complex"/>
    <property type="evidence" value="ECO:0000314"/>
    <property type="project" value="FlyBase"/>
</dbReference>
<dbReference type="GO" id="GO:0005774">
    <property type="term" value="C:vacuolar membrane"/>
    <property type="evidence" value="ECO:0000318"/>
    <property type="project" value="GO_Central"/>
</dbReference>
<dbReference type="GO" id="GO:0016740">
    <property type="term" value="F:transferase activity"/>
    <property type="evidence" value="ECO:0007669"/>
    <property type="project" value="UniProtKB-KW"/>
</dbReference>
<dbReference type="GO" id="GO:0008270">
    <property type="term" value="F:zinc ion binding"/>
    <property type="evidence" value="ECO:0007669"/>
    <property type="project" value="UniProtKB-KW"/>
</dbReference>
<dbReference type="GO" id="GO:0006914">
    <property type="term" value="P:autophagy"/>
    <property type="evidence" value="ECO:0007669"/>
    <property type="project" value="UniProtKB-KW"/>
</dbReference>
<dbReference type="GO" id="GO:0051301">
    <property type="term" value="P:cell division"/>
    <property type="evidence" value="ECO:0007669"/>
    <property type="project" value="UniProtKB-KW"/>
</dbReference>
<dbReference type="GO" id="GO:0034198">
    <property type="term" value="P:cellular response to amino acid starvation"/>
    <property type="evidence" value="ECO:0000318"/>
    <property type="project" value="GO_Central"/>
</dbReference>
<dbReference type="GO" id="GO:0007042">
    <property type="term" value="P:lysosomal lumen acidification"/>
    <property type="evidence" value="ECO:0000315"/>
    <property type="project" value="UniProtKB"/>
</dbReference>
<dbReference type="GO" id="GO:0030307">
    <property type="term" value="P:positive regulation of cell growth"/>
    <property type="evidence" value="ECO:0000315"/>
    <property type="project" value="FlyBase"/>
</dbReference>
<dbReference type="GO" id="GO:0016239">
    <property type="term" value="P:positive regulation of macroautophagy"/>
    <property type="evidence" value="ECO:0000315"/>
    <property type="project" value="FlyBase"/>
</dbReference>
<dbReference type="GO" id="GO:1904263">
    <property type="term" value="P:positive regulation of TORC1 signaling"/>
    <property type="evidence" value="ECO:0000315"/>
    <property type="project" value="UniProtKB"/>
</dbReference>
<dbReference type="GO" id="GO:0016567">
    <property type="term" value="P:protein ubiquitination"/>
    <property type="evidence" value="ECO:0007669"/>
    <property type="project" value="UniProtKB-UniPathway"/>
</dbReference>
<dbReference type="GO" id="GO:0010506">
    <property type="term" value="P:regulation of autophagy"/>
    <property type="evidence" value="ECO:0000315"/>
    <property type="project" value="UniProtKB"/>
</dbReference>
<dbReference type="CDD" id="cd16693">
    <property type="entry name" value="mRING-H2-C3H3C2_WDR24"/>
    <property type="match status" value="1"/>
</dbReference>
<dbReference type="CDD" id="cd00200">
    <property type="entry name" value="WD40"/>
    <property type="match status" value="1"/>
</dbReference>
<dbReference type="FunFam" id="2.130.10.10:FF:001625">
    <property type="entry name" value="Uncharacterized protein, isoform A"/>
    <property type="match status" value="1"/>
</dbReference>
<dbReference type="FunFam" id="2.130.10.10:FF:001648">
    <property type="entry name" value="Uncharacterized protein, isoform B"/>
    <property type="match status" value="1"/>
</dbReference>
<dbReference type="Gene3D" id="2.130.10.10">
    <property type="entry name" value="YVTN repeat-like/Quinoprotein amine dehydrogenase"/>
    <property type="match status" value="2"/>
</dbReference>
<dbReference type="InterPro" id="IPR015943">
    <property type="entry name" value="WD40/YVTN_repeat-like_dom_sf"/>
</dbReference>
<dbReference type="InterPro" id="IPR019775">
    <property type="entry name" value="WD40_repeat_CS"/>
</dbReference>
<dbReference type="InterPro" id="IPR036322">
    <property type="entry name" value="WD40_repeat_dom_sf"/>
</dbReference>
<dbReference type="InterPro" id="IPR001680">
    <property type="entry name" value="WD40_rpt"/>
</dbReference>
<dbReference type="InterPro" id="IPR037590">
    <property type="entry name" value="WDR24"/>
</dbReference>
<dbReference type="PANTHER" id="PTHR46200">
    <property type="entry name" value="GATOR COMPLEX PROTEIN WDR24"/>
    <property type="match status" value="1"/>
</dbReference>
<dbReference type="PANTHER" id="PTHR46200:SF1">
    <property type="entry name" value="GATOR COMPLEX PROTEIN WDR24"/>
    <property type="match status" value="1"/>
</dbReference>
<dbReference type="Pfam" id="PF00400">
    <property type="entry name" value="WD40"/>
    <property type="match status" value="3"/>
</dbReference>
<dbReference type="SMART" id="SM00320">
    <property type="entry name" value="WD40"/>
    <property type="match status" value="7"/>
</dbReference>
<dbReference type="SUPFAM" id="SSF50978">
    <property type="entry name" value="WD40 repeat-like"/>
    <property type="match status" value="1"/>
</dbReference>
<dbReference type="PROSITE" id="PS00678">
    <property type="entry name" value="WD_REPEATS_1"/>
    <property type="match status" value="3"/>
</dbReference>
<dbReference type="PROSITE" id="PS50082">
    <property type="entry name" value="WD_REPEATS_2"/>
    <property type="match status" value="3"/>
</dbReference>
<dbReference type="PROSITE" id="PS50294">
    <property type="entry name" value="WD_REPEATS_REGION"/>
    <property type="match status" value="1"/>
</dbReference>
<sequence>MPDSVEDTSTISLRICLEGHANALALNKDNNQIALAGRSLLKVYSINSNGFTESCNMRGKNQNLSYSANDVAWSTLDSNLLATAATNGVVSVWDLSKFGRQKQLLVYNEHERTAHTVTFHSSEPNILISGSQDGTIKCFDIRSDKSINTYFCNSESVRDVKFSPHTQNIFSAVSENGTVQLWDMRKWDKCMVQFTAHYGPVYTCDWHPTRNWLATGSRDKQIKVWNMDGRPGLEHTIHTIAVVGRVKWRPERTYHIASCALVVDYSVHVWDIRRPYIPFASFNEHTNVTTGIAWQGSDSHCLLSISKDSTIYKHAFKDATRPALKANAQGASLGRFGDISFANKIKEYEPKTSGASNTKSSSFIRRKTNVAGSIQFHLDHSKMYKFMVNDTFSGYPLSESVSRPTQEHESFIGCARELVISGKKLSELCEHNAEVSKKYGKHNATTLWNFIKLFYGSNHFEPPFEHRSSFSNQKNPMNSRRATQVASDWPQQRTELGQDLNGNTPETAHEIDVANVDDDTLGSSGVEHPPTSSVILSETQIISEITFDNFELLRNGFIYVGPTECPKALAFPALHHDVQAARPQLDLKASDHEKSPPPHVPTVLKVSHVPPIPMWEPHKFVSDALMLMNDVGDVQTALTVLIALGEARKLLPIDDALVEHWFYTYVDQLHRYELWNEACEVINRSWLRSVQQLNQHSTAMHTNCGECGRPMGGKVGWYCDKCKSMQSAKCCVCGLIVRGVYAWCQGCSHGGHIEHLQKYFAKHSKCPKCGHLCAYS</sequence>
<feature type="chain" id="PRO_0000437416" description="GATOR2 complex protein Wdr24" evidence="8">
    <location>
        <begin position="1"/>
        <end position="776"/>
    </location>
</feature>
<feature type="repeat" description="WD 1" evidence="2">
    <location>
        <begin position="63"/>
        <end position="103"/>
    </location>
</feature>
<feature type="repeat" description="WD 2" evidence="2">
    <location>
        <begin position="109"/>
        <end position="149"/>
    </location>
</feature>
<feature type="repeat" description="WD 3" evidence="2">
    <location>
        <begin position="152"/>
        <end position="192"/>
    </location>
</feature>
<feature type="repeat" description="WD 4" evidence="2">
    <location>
        <begin position="196"/>
        <end position="235"/>
    </location>
</feature>
<feature type="repeat" description="WD 5" evidence="2">
    <location>
        <begin position="238"/>
        <end position="280"/>
    </location>
</feature>
<feature type="repeat" description="WD 6" evidence="2">
    <location>
        <begin position="284"/>
        <end position="326"/>
    </location>
</feature>
<feature type="zinc finger region" description="C4-type" evidence="1">
    <location>
        <begin position="703"/>
        <end position="726"/>
    </location>
</feature>
<feature type="zinc finger region" description="RING-type; atypical" evidence="1">
    <location>
        <begin position="728"/>
        <end position="776"/>
    </location>
</feature>
<feature type="region of interest" description="Disordered" evidence="3">
    <location>
        <begin position="466"/>
        <end position="490"/>
    </location>
</feature>
<feature type="compositionally biased region" description="Polar residues" evidence="3">
    <location>
        <begin position="469"/>
        <end position="490"/>
    </location>
</feature>
<feature type="binding site" evidence="1">
    <location>
        <position position="704"/>
    </location>
    <ligand>
        <name>Zn(2+)</name>
        <dbReference type="ChEBI" id="CHEBI:29105"/>
        <label>1</label>
    </ligand>
</feature>
<feature type="binding site" evidence="1">
    <location>
        <position position="707"/>
    </location>
    <ligand>
        <name>Zn(2+)</name>
        <dbReference type="ChEBI" id="CHEBI:29105"/>
        <label>1</label>
    </ligand>
</feature>
<feature type="binding site" evidence="1">
    <location>
        <position position="719"/>
    </location>
    <ligand>
        <name>Zn(2+)</name>
        <dbReference type="ChEBI" id="CHEBI:29105"/>
        <label>1</label>
    </ligand>
</feature>
<feature type="binding site" evidence="1">
    <location>
        <position position="722"/>
    </location>
    <ligand>
        <name>Zn(2+)</name>
        <dbReference type="ChEBI" id="CHEBI:29105"/>
        <label>1</label>
    </ligand>
</feature>
<feature type="binding site" evidence="1">
    <location>
        <position position="730"/>
    </location>
    <ligand>
        <name>Zn(2+)</name>
        <dbReference type="ChEBI" id="CHEBI:29105"/>
        <label>2</label>
    </ligand>
</feature>
<feature type="binding site" evidence="1">
    <location>
        <position position="733"/>
    </location>
    <ligand>
        <name>Zn(2+)</name>
        <dbReference type="ChEBI" id="CHEBI:29105"/>
        <label>2</label>
    </ligand>
</feature>
<feature type="binding site" evidence="1">
    <location>
        <position position="744"/>
    </location>
    <ligand>
        <name>Zn(2+)</name>
        <dbReference type="ChEBI" id="CHEBI:29105"/>
        <label>3</label>
    </ligand>
</feature>
<feature type="binding site" evidence="1">
    <location>
        <position position="747"/>
    </location>
    <ligand>
        <name>Zn(2+)</name>
        <dbReference type="ChEBI" id="CHEBI:29105"/>
        <label>3</label>
    </ligand>
</feature>
<feature type="binding site" evidence="1">
    <location>
        <position position="749"/>
    </location>
    <ligand>
        <name>Zn(2+)</name>
        <dbReference type="ChEBI" id="CHEBI:29105"/>
        <label>4</label>
    </ligand>
</feature>
<feature type="binding site" evidence="1">
    <location>
        <position position="752"/>
    </location>
    <ligand>
        <name>Zn(2+)</name>
        <dbReference type="ChEBI" id="CHEBI:29105"/>
        <label>2</label>
    </ligand>
</feature>
<feature type="binding site" evidence="1">
    <location>
        <position position="755"/>
    </location>
    <ligand>
        <name>Zn(2+)</name>
        <dbReference type="ChEBI" id="CHEBI:29105"/>
        <label>2</label>
    </ligand>
</feature>
<feature type="binding site" evidence="1">
    <location>
        <position position="766"/>
    </location>
    <ligand>
        <name>Zn(2+)</name>
        <dbReference type="ChEBI" id="CHEBI:29105"/>
        <label>4</label>
    </ligand>
</feature>
<feature type="binding site" evidence="1">
    <location>
        <position position="769"/>
    </location>
    <ligand>
        <name>Zn(2+)</name>
        <dbReference type="ChEBI" id="CHEBI:29105"/>
        <label>4</label>
    </ligand>
</feature>
<feature type="binding site" evidence="1">
    <location>
        <position position="771"/>
    </location>
    <ligand>
        <name>Zn(2+)</name>
        <dbReference type="ChEBI" id="CHEBI:29105"/>
        <label>3</label>
    </ligand>
</feature>
<feature type="binding site" evidence="1">
    <location>
        <position position="773"/>
    </location>
    <ligand>
        <name>Zn(2+)</name>
        <dbReference type="ChEBI" id="CHEBI:29105"/>
        <label>3</label>
    </ligand>
</feature>